<reference key="1">
    <citation type="journal article" date="1990" name="Plant Physiol.">
        <title>Sequence and expression of a HSP83 from Arabidopsis thaliana.</title>
        <authorList>
            <person name="Conner T.W."/>
            <person name="Lafayette P.R."/>
            <person name="Nagao R.T."/>
            <person name="Key J.L."/>
        </authorList>
    </citation>
    <scope>NUCLEOTIDE SEQUENCE [MRNA]</scope>
    <source>
        <strain>cv. Columbia</strain>
        <tissue>Leaf</tissue>
    </source>
</reference>
<reference key="2">
    <citation type="journal article" date="1994" name="Plant Cell Physiol.">
        <title>Analysis of tissue-specific expression of Arabidopsis thaliana HSP90-family gene HSP81.</title>
        <authorList>
            <person name="Yabe N."/>
            <person name="Takahashi T."/>
            <person name="Komeda Y."/>
        </authorList>
    </citation>
    <scope>NUCLEOTIDE SEQUENCE [GENOMIC DNA]</scope>
    <source>
        <strain>cv. Columbia</strain>
        <tissue>Seed</tissue>
    </source>
</reference>
<reference key="3">
    <citation type="journal article" date="1997" name="Plant Mol. Biol.">
        <title>Genomic organization of hsp90 gene family in Arabidopsis.</title>
        <authorList>
            <person name="Milioni D."/>
            <person name="Hatzopoulos P."/>
        </authorList>
    </citation>
    <scope>NUCLEOTIDE SEQUENCE [GENOMIC DNA]</scope>
    <source>
        <strain>cv. Landsberg erecta</strain>
    </source>
</reference>
<reference key="4">
    <citation type="submission" date="1999-04" db="EMBL/GenBank/DDBJ databases">
        <title>Structural analysis of Arabidopsis thaliana chromosome 5. XI.</title>
        <authorList>
            <person name="Kaneko T."/>
            <person name="Katoh T."/>
            <person name="Asamizu E."/>
            <person name="Sato S."/>
            <person name="Nakamura Y."/>
            <person name="Kotani H."/>
            <person name="Tabata S."/>
        </authorList>
    </citation>
    <scope>NUCLEOTIDE SEQUENCE [LARGE SCALE GENOMIC DNA]</scope>
    <source>
        <strain>cv. Columbia</strain>
    </source>
</reference>
<reference key="5">
    <citation type="journal article" date="2017" name="Plant J.">
        <title>Araport11: a complete reannotation of the Arabidopsis thaliana reference genome.</title>
        <authorList>
            <person name="Cheng C.Y."/>
            <person name="Krishnakumar V."/>
            <person name="Chan A.P."/>
            <person name="Thibaud-Nissen F."/>
            <person name="Schobel S."/>
            <person name="Town C.D."/>
        </authorList>
    </citation>
    <scope>GENOME REANNOTATION</scope>
    <source>
        <strain>cv. Columbia</strain>
    </source>
</reference>
<reference key="6">
    <citation type="journal article" date="2003" name="Science">
        <title>Empirical analysis of transcriptional activity in the Arabidopsis genome.</title>
        <authorList>
            <person name="Yamada K."/>
            <person name="Lim J."/>
            <person name="Dale J.M."/>
            <person name="Chen H."/>
            <person name="Shinn P."/>
            <person name="Palm C.J."/>
            <person name="Southwick A.M."/>
            <person name="Wu H.C."/>
            <person name="Kim C.J."/>
            <person name="Nguyen M."/>
            <person name="Pham P.K."/>
            <person name="Cheuk R.F."/>
            <person name="Karlin-Newmann G."/>
            <person name="Liu S.X."/>
            <person name="Lam B."/>
            <person name="Sakano H."/>
            <person name="Wu T."/>
            <person name="Yu G."/>
            <person name="Miranda M."/>
            <person name="Quach H.L."/>
            <person name="Tripp M."/>
            <person name="Chang C.H."/>
            <person name="Lee J.M."/>
            <person name="Toriumi M.J."/>
            <person name="Chan M.M."/>
            <person name="Tang C.C."/>
            <person name="Onodera C.S."/>
            <person name="Deng J.M."/>
            <person name="Akiyama K."/>
            <person name="Ansari Y."/>
            <person name="Arakawa T."/>
            <person name="Banh J."/>
            <person name="Banno F."/>
            <person name="Bowser L."/>
            <person name="Brooks S.Y."/>
            <person name="Carninci P."/>
            <person name="Chao Q."/>
            <person name="Choy N."/>
            <person name="Enju A."/>
            <person name="Goldsmith A.D."/>
            <person name="Gurjal M."/>
            <person name="Hansen N.F."/>
            <person name="Hayashizaki Y."/>
            <person name="Johnson-Hopson C."/>
            <person name="Hsuan V.W."/>
            <person name="Iida K."/>
            <person name="Karnes M."/>
            <person name="Khan S."/>
            <person name="Koesema E."/>
            <person name="Ishida J."/>
            <person name="Jiang P.X."/>
            <person name="Jones T."/>
            <person name="Kawai J."/>
            <person name="Kamiya A."/>
            <person name="Meyers C."/>
            <person name="Nakajima M."/>
            <person name="Narusaka M."/>
            <person name="Seki M."/>
            <person name="Sakurai T."/>
            <person name="Satou M."/>
            <person name="Tamse R."/>
            <person name="Vaysberg M."/>
            <person name="Wallender E.K."/>
            <person name="Wong C."/>
            <person name="Yamamura Y."/>
            <person name="Yuan S."/>
            <person name="Shinozaki K."/>
            <person name="Davis R.W."/>
            <person name="Theologis A."/>
            <person name="Ecker J.R."/>
        </authorList>
    </citation>
    <scope>NUCLEOTIDE SEQUENCE [LARGE SCALE MRNA]</scope>
    <source>
        <strain>cv. Columbia</strain>
    </source>
</reference>
<reference key="7">
    <citation type="journal article" date="2001" name="Cell Stress Chaperones">
        <title>The Hsp90 family of proteins in Arabidopsis thaliana.</title>
        <authorList>
            <person name="Krishna P."/>
            <person name="Gloor G."/>
        </authorList>
    </citation>
    <scope>GENE FAMILY</scope>
    <scope>NOMENCLATURE</scope>
</reference>
<reference key="8">
    <citation type="journal article" date="2003" name="Proc. Natl. Acad. Sci. U.S.A.">
        <title>HSP90 interacts with RAR1 and SGT1 and is essential for RPS2-mediated disease resistance in Arabidopsis.</title>
        <authorList>
            <person name="Takahashi A."/>
            <person name="Casais C."/>
            <person name="Ichimura K."/>
            <person name="Shirasu K."/>
        </authorList>
    </citation>
    <scope>FUNCTION</scope>
    <scope>INTERACTION WITH RAR1</scope>
    <scope>INDUCTION</scope>
    <scope>DISRUPTION PHENOTYPE</scope>
</reference>
<reference key="9">
    <citation type="journal article" date="2005" name="J. Exp. Bot.">
        <title>Tight regulation of expression of two Arabidopsis cytosolic Hsp90 genes during embryo development.</title>
        <authorList>
            <person name="Prasinos C."/>
            <person name="Krampis K."/>
            <person name="Samakovli D."/>
            <person name="Hatzopoulos P."/>
        </authorList>
    </citation>
    <scope>DEVELOPMENTAL STAGE</scope>
</reference>
<reference key="10">
    <citation type="journal article" date="2006" name="Proc. Natl. Acad. Sci. U.S.A.">
        <title>RAR1, a central player in plant immunity, is targeted by Pseudomonas syringae effector AvrB.</title>
        <authorList>
            <person name="Shang Y."/>
            <person name="Li X."/>
            <person name="Cui H."/>
            <person name="He P."/>
            <person name="Thilmony R."/>
            <person name="Chintamanani S."/>
            <person name="Zwiesler-Vollick J."/>
            <person name="Gopalan S."/>
            <person name="Tang X."/>
            <person name="Zhou J.M."/>
        </authorList>
    </citation>
    <scope>INTERACTION WITH RAR1</scope>
</reference>
<reference key="11">
    <citation type="journal article" date="2008" name="J. Proteome Res.">
        <title>Site-specific phosphorylation profiling of Arabidopsis proteins by mass spectrometry and peptide chip analysis.</title>
        <authorList>
            <person name="de la Fuente van Bentem S."/>
            <person name="Anrather D."/>
            <person name="Dohnal I."/>
            <person name="Roitinger E."/>
            <person name="Csaszar E."/>
            <person name="Joore J."/>
            <person name="Buijnink J."/>
            <person name="Carreri A."/>
            <person name="Forzani C."/>
            <person name="Lorkovic Z.J."/>
            <person name="Barta A."/>
            <person name="Lecourieux D."/>
            <person name="Verhounig A."/>
            <person name="Jonak C."/>
            <person name="Hirt H."/>
        </authorList>
    </citation>
    <scope>PHOSPHORYLATION [LARGE SCALE ANALYSIS] AT SER-219</scope>
    <scope>IDENTIFICATION BY MASS SPECTROMETRY [LARGE SCALE ANALYSIS]</scope>
    <source>
        <tissue>Root</tissue>
    </source>
</reference>
<reference key="12">
    <citation type="journal article" date="2009" name="J. Proteomics">
        <title>Phosphoproteomic analysis of nuclei-enriched fractions from Arabidopsis thaliana.</title>
        <authorList>
            <person name="Jones A.M.E."/>
            <person name="MacLean D."/>
            <person name="Studholme D.J."/>
            <person name="Serna-Sanz A."/>
            <person name="Andreasson E."/>
            <person name="Rathjen J.P."/>
            <person name="Peck S.C."/>
        </authorList>
    </citation>
    <scope>PHOSPHORYLATION [LARGE SCALE ANALYSIS] AT SER-219</scope>
    <scope>IDENTIFICATION BY MASS SPECTROMETRY [LARGE SCALE ANALYSIS]</scope>
    <source>
        <strain>cv. Columbia</strain>
    </source>
</reference>
<reference key="13">
    <citation type="journal article" date="2009" name="Plant Physiol.">
        <title>Large-scale Arabidopsis phosphoproteome profiling reveals novel chloroplast kinase substrates and phosphorylation networks.</title>
        <authorList>
            <person name="Reiland S."/>
            <person name="Messerli G."/>
            <person name="Baerenfaller K."/>
            <person name="Gerrits B."/>
            <person name="Endler A."/>
            <person name="Grossmann J."/>
            <person name="Gruissem W."/>
            <person name="Baginsky S."/>
        </authorList>
    </citation>
    <scope>PHOSPHORYLATION [LARGE SCALE ANALYSIS] AT SER-219</scope>
    <scope>IDENTIFICATION BY MASS SPECTROMETRY [LARGE SCALE ANALYSIS]</scope>
</reference>
<reference key="14">
    <citation type="journal article" date="2013" name="J. Biol. Chem.">
        <title>Quantification of interaction strengths between chaperones and tetratricopeptide repeat domain-containing membrane proteins.</title>
        <authorList>
            <person name="Schweiger R."/>
            <person name="Soll J."/>
            <person name="Jung K."/>
            <person name="Heermann R."/>
            <person name="Schwenkert S."/>
        </authorList>
    </citation>
    <scope>HOMODIMERIZATION</scope>
    <scope>INTERACTION WITH OEP61; OEP64 AND OM64</scope>
</reference>
<reference key="15">
    <citation type="journal article" date="2013" name="Plant Physiol. Biochem.">
        <title>Structural and functional differences of cytosolic 90-kDa heat-shock proteins (Hsp90s) in Arabidopsis thaliana.</title>
        <authorList>
            <person name="Cha J.Y."/>
            <person name="Ahn G."/>
            <person name="Kim J.Y."/>
            <person name="Kang S.B."/>
            <person name="Kim M.R."/>
            <person name="Su'udi M."/>
            <person name="Kim W.Y."/>
            <person name="Son D."/>
        </authorList>
    </citation>
    <scope>FUNCTION</scope>
</reference>
<reference key="16">
    <citation type="journal article" date="2014" name="Mol. Cells">
        <title>Characterization of a novel DWD protein that participates in heat stress response in Arabidopsis.</title>
        <authorList>
            <person name="Kim S.-H."/>
            <person name="Lee J.-H."/>
            <person name="Seo K.-I."/>
            <person name="Ryu B."/>
            <person name="Sung Y."/>
            <person name="Chung T."/>
            <person name="Deng X.W."/>
            <person name="Lee J.-H."/>
        </authorList>
    </citation>
    <scope>INTERACTION WITH HTD1</scope>
</reference>
<reference key="17">
    <citation type="journal article" date="2015" name="PLoS ONE">
        <title>Understanding the physical and molecular basis of stability of Arabidopsis DNA Pol lambda under UV-B and high NaCl stress.</title>
        <authorList>
            <person name="Roy S."/>
            <person name="Banerjee V."/>
            <person name="Das K.P."/>
        </authorList>
    </citation>
    <scope>INTERACTION WITH POLL</scope>
</reference>
<gene>
    <name evidence="11" type="primary">HSP90-1</name>
    <name evidence="11" type="synonym">HSP81-1</name>
    <name type="synonym">HSP83</name>
    <name type="ordered locus">At5g52640</name>
    <name type="ORF">F6N7.13</name>
</gene>
<protein>
    <recommendedName>
        <fullName evidence="12">Heat shock protein 90-1</fullName>
        <shortName evidence="12">AtHSP90.1</shortName>
        <shortName evidence="11">AtHsp90-1</shortName>
    </recommendedName>
    <alternativeName>
        <fullName evidence="12">Heat shock protein 81-1</fullName>
        <shortName evidence="11">Hsp81-1</shortName>
    </alternativeName>
    <alternativeName>
        <fullName>Heat shock protein 83</fullName>
    </alternativeName>
</protein>
<sequence>MADAETFAFQAEINQLLSLIINTFYSNKEIFLRELISNSSDALDKIRFESLTDKSKLDGQPELFIRLVPDKSNKTLSIIDSGIGMTKADLVNNLGTIARSGTKEFMEALQAGADVSMIGQFGVGFYSAYLVAEKVVVTTKHNDDEQYVWESQAGGSFTVTRDVDGEPLGRGTKITLFLKDDQLEYLEERRLKDLVKKHSEFISYPIYLWTEKTTEKEISDDEDEDEPKKENEGEVEEVDEEKEKDGKKKKKIKEVSHEWELINKQKPIWLRKPEEITKEEYAAFYKSLTNDWEDHLAVKHFSVEGQLEFKAILFVPKRAPFDLFDTRKKLNNIKLYVRRVFIMDNCEELIPEYLSFVKGVVDSDDLPLNISRETLQQNKILKVIRKNLVKKCIEMFNEIAENKEDYTKFYEAFSKNLKLGIHEDSQNRGKIADLLRYHSTKSGDEMTSFKDYVTRMKEGQKDIFYITGESKKAVENSPFLERLKKRGYEVLYMVDAIDEYAVGQLKEYDGKKLVSATKEGLKLEDETEEEKKKREEKKKSFENLCKTIKEILGDKVEKVVVSDRIVDSPCCLVTGEYGWTANMERIMKAQALRDSSMSGYMSSKKTMEINPDNGIMEELRKRAEADKNDKSVKDLVMLLYETALLTSGFSLDEPNTFAARIHRMLKLGLSIDEDENVEEDGDMPELEEDAAEESKMEEVD</sequence>
<organism>
    <name type="scientific">Arabidopsis thaliana</name>
    <name type="common">Mouse-ear cress</name>
    <dbReference type="NCBI Taxonomy" id="3702"/>
    <lineage>
        <taxon>Eukaryota</taxon>
        <taxon>Viridiplantae</taxon>
        <taxon>Streptophyta</taxon>
        <taxon>Embryophyta</taxon>
        <taxon>Tracheophyta</taxon>
        <taxon>Spermatophyta</taxon>
        <taxon>Magnoliopsida</taxon>
        <taxon>eudicotyledons</taxon>
        <taxon>Gunneridae</taxon>
        <taxon>Pentapetalae</taxon>
        <taxon>rosids</taxon>
        <taxon>malvids</taxon>
        <taxon>Brassicales</taxon>
        <taxon>Brassicaceae</taxon>
        <taxon>Camelineae</taxon>
        <taxon>Arabidopsis</taxon>
    </lineage>
</organism>
<comment type="function">
    <text evidence="4 7">Functions as a holding molecular chaperone (holdase) which stabilizes unfolding protein intermediates and rapidly releases them in an active form once stress has abated. Functions as a folding molecular chaperone (foldase) that assists the non-covalent folding of proteins in an ATP-dependent manner (PubMed:23827697). Molecular chaperone involved in R gene-mediated disease resistance. Required for full RPS2-mediated resistance through interaction with RAR1. Possesses probably ATPase activity (PubMed:14504384).</text>
</comment>
<comment type="subunit">
    <text evidence="4 6 8 9 10">Homodimer (PubMed:24036116). Interacts with RAR1 (PubMed:14504384, PubMed:17148606). Interacts with OEP61, OEP64 and OM64 (PubMed:24036116). Interacts with POLL (PubMed:26230318). Interacts with HTD1 (PubMed:25358503).</text>
</comment>
<comment type="interaction">
    <interactant intactId="EBI-1778266">
        <id>P27323</id>
    </interactant>
    <interactant intactId="EBI-2409351">
        <id>Q38931</id>
        <label>FKBP62</label>
    </interactant>
    <organismsDiffer>false</organismsDiffer>
    <experiments>4</experiments>
</comment>
<comment type="subcellular location">
    <subcellularLocation>
        <location evidence="12">Cytoplasm</location>
    </subcellularLocation>
</comment>
<comment type="tissue specificity">
    <text>Expressed constitutively in roots only. After heat treatment, expressed in most tissues. Levels also increase after heavy metal treatment.</text>
</comment>
<comment type="developmental stage">
    <text evidence="5">Expressed in pollen during pollen development, germination and tube growth. Expressed during embryo development and young seedling growth.</text>
</comment>
<comment type="induction">
    <text evidence="4">By heat shock and infection by avirulent and virulent bacterial pathogens (P.syringae).</text>
</comment>
<comment type="domain">
    <text evidence="1">The TPR repeat-binding motif mediates interaction with TPR repeat-containing proteins.</text>
</comment>
<comment type="disruption phenotype">
    <text evidence="4">No visible phenotype under normal growth condition. In case of infection, plants are altered in RPS2-mediated disease resistance.</text>
</comment>
<comment type="similarity">
    <text evidence="12">Belongs to the heat shock protein 90 family.</text>
</comment>
<comment type="sequence caution" evidence="12">
    <conflict type="erroneous initiation">
        <sequence resource="EMBL-CDS" id="AAA32822"/>
    </conflict>
    <text>Extended N-terminus.</text>
</comment>
<comment type="sequence caution" evidence="12">
    <conflict type="erroneous initiation">
        <sequence resource="EMBL-CDS" id="AAM91104"/>
    </conflict>
    <text>Extended N-terminus.</text>
</comment>
<comment type="sequence caution" evidence="12">
    <conflict type="erroneous initiation">
        <sequence resource="EMBL-CDS" id="AAN46890"/>
    </conflict>
    <text>Extended N-terminus.</text>
</comment>
<comment type="sequence caution" evidence="12">
    <conflict type="erroneous initiation">
        <sequence resource="EMBL-CDS" id="BAA98082"/>
    </conflict>
    <text>Extended N-terminus.</text>
</comment>
<comment type="sequence caution" evidence="12">
    <conflict type="erroneous initiation">
        <sequence resource="EMBL-CDS" id="CAA68885"/>
    </conflict>
    <text>Extended N-terminus.</text>
</comment>
<accession>P27323</accession>
<accession>Q03930</accession>
<accession>Q8H0Z5</accession>
<accession>Q96268</accession>
<accession>Q9LTF3</accession>
<dbReference type="EMBL" id="M62984">
    <property type="protein sequence ID" value="AAA32822.1"/>
    <property type="status" value="ALT_INIT"/>
    <property type="molecule type" value="mRNA"/>
</dbReference>
<dbReference type="EMBL" id="D00710">
    <property type="protein sequence ID" value="BAA00615.1"/>
    <property type="molecule type" value="Genomic_DNA"/>
</dbReference>
<dbReference type="EMBL" id="Y07613">
    <property type="protein sequence ID" value="CAA68885.1"/>
    <property type="status" value="ALT_INIT"/>
    <property type="molecule type" value="Genomic_DNA"/>
</dbReference>
<dbReference type="EMBL" id="AB025606">
    <property type="protein sequence ID" value="BAA98082.1"/>
    <property type="status" value="ALT_INIT"/>
    <property type="molecule type" value="Genomic_DNA"/>
</dbReference>
<dbReference type="EMBL" id="CP002688">
    <property type="protein sequence ID" value="AED96244.2"/>
    <property type="molecule type" value="Genomic_DNA"/>
</dbReference>
<dbReference type="EMBL" id="AY128296">
    <property type="protein sequence ID" value="AAM91104.1"/>
    <property type="status" value="ALT_INIT"/>
    <property type="molecule type" value="mRNA"/>
</dbReference>
<dbReference type="EMBL" id="BT001091">
    <property type="protein sequence ID" value="AAN46890.1"/>
    <property type="status" value="ALT_INIT"/>
    <property type="molecule type" value="mRNA"/>
</dbReference>
<dbReference type="PIR" id="A45508">
    <property type="entry name" value="A45508"/>
</dbReference>
<dbReference type="SMR" id="P27323"/>
<dbReference type="BioGRID" id="20586">
    <property type="interactions" value="44"/>
</dbReference>
<dbReference type="DIP" id="DIP-47087N"/>
<dbReference type="FunCoup" id="P27323">
    <property type="interactions" value="2846"/>
</dbReference>
<dbReference type="IntAct" id="P27323">
    <property type="interactions" value="5"/>
</dbReference>
<dbReference type="STRING" id="3702.P27323"/>
<dbReference type="iPTMnet" id="P27323"/>
<dbReference type="MetOSite" id="P27323"/>
<dbReference type="PaxDb" id="3702-AT5G52640.1"/>
<dbReference type="ProteomicsDB" id="232102"/>
<dbReference type="EnsemblPlants" id="AT5G52640.1">
    <property type="protein sequence ID" value="AT5G52640.1"/>
    <property type="gene ID" value="AT5G52640"/>
</dbReference>
<dbReference type="GeneID" id="835341"/>
<dbReference type="Gramene" id="AT5G52640.1">
    <property type="protein sequence ID" value="AT5G52640.1"/>
    <property type="gene ID" value="AT5G52640"/>
</dbReference>
<dbReference type="KEGG" id="ath:AT5G52640"/>
<dbReference type="Araport" id="AT5G52640"/>
<dbReference type="TAIR" id="AT5G52640">
    <property type="gene designation" value="HSP90.1"/>
</dbReference>
<dbReference type="eggNOG" id="KOG0019">
    <property type="taxonomic scope" value="Eukaryota"/>
</dbReference>
<dbReference type="HOGENOM" id="CLU_006684_1_3_1"/>
<dbReference type="InParanoid" id="P27323"/>
<dbReference type="OMA" id="TRMKAEQ"/>
<dbReference type="PhylomeDB" id="P27323"/>
<dbReference type="CD-CODE" id="4299E36E">
    <property type="entry name" value="Nucleolus"/>
</dbReference>
<dbReference type="PRO" id="PR:P27323"/>
<dbReference type="Proteomes" id="UP000006548">
    <property type="component" value="Chromosome 5"/>
</dbReference>
<dbReference type="ExpressionAtlas" id="P27323">
    <property type="expression patterns" value="baseline and differential"/>
</dbReference>
<dbReference type="GO" id="GO:0005737">
    <property type="term" value="C:cytoplasm"/>
    <property type="evidence" value="ECO:0007669"/>
    <property type="project" value="UniProtKB-SubCell"/>
</dbReference>
<dbReference type="GO" id="GO:0005524">
    <property type="term" value="F:ATP binding"/>
    <property type="evidence" value="ECO:0007669"/>
    <property type="project" value="UniProtKB-KW"/>
</dbReference>
<dbReference type="GO" id="GO:0016887">
    <property type="term" value="F:ATP hydrolysis activity"/>
    <property type="evidence" value="ECO:0007669"/>
    <property type="project" value="InterPro"/>
</dbReference>
<dbReference type="GO" id="GO:0140662">
    <property type="term" value="F:ATP-dependent protein folding chaperone"/>
    <property type="evidence" value="ECO:0007669"/>
    <property type="project" value="InterPro"/>
</dbReference>
<dbReference type="GO" id="GO:0051082">
    <property type="term" value="F:unfolded protein binding"/>
    <property type="evidence" value="ECO:0007669"/>
    <property type="project" value="InterPro"/>
</dbReference>
<dbReference type="GO" id="GO:0061077">
    <property type="term" value="P:chaperone-mediated protein folding"/>
    <property type="evidence" value="ECO:0000314"/>
    <property type="project" value="UniProtKB"/>
</dbReference>
<dbReference type="GO" id="GO:0042742">
    <property type="term" value="P:defense response to bacterium"/>
    <property type="evidence" value="ECO:0000315"/>
    <property type="project" value="UniProtKB"/>
</dbReference>
<dbReference type="GO" id="GO:0045087">
    <property type="term" value="P:innate immune response"/>
    <property type="evidence" value="ECO:0007669"/>
    <property type="project" value="UniProtKB-KW"/>
</dbReference>
<dbReference type="CDD" id="cd16927">
    <property type="entry name" value="HATPase_Hsp90-like"/>
    <property type="match status" value="1"/>
</dbReference>
<dbReference type="FunFam" id="3.30.565.10:FF:000012">
    <property type="entry name" value="Heat shock cognate protein"/>
    <property type="match status" value="1"/>
</dbReference>
<dbReference type="FunFam" id="1.20.120.790:FF:000001">
    <property type="entry name" value="Heat shock protein 90 alpha"/>
    <property type="match status" value="1"/>
</dbReference>
<dbReference type="FunFam" id="3.30.230.80:FF:000001">
    <property type="entry name" value="Heat shock protein 90 alpha"/>
    <property type="match status" value="1"/>
</dbReference>
<dbReference type="FunFam" id="3.40.50.11260:FF:000001">
    <property type="entry name" value="Heat shock protein 90 alpha"/>
    <property type="match status" value="1"/>
</dbReference>
<dbReference type="Gene3D" id="3.30.230.80">
    <property type="match status" value="1"/>
</dbReference>
<dbReference type="Gene3D" id="3.40.50.11260">
    <property type="match status" value="1"/>
</dbReference>
<dbReference type="Gene3D" id="1.20.120.790">
    <property type="entry name" value="Heat shock protein 90, C-terminal domain"/>
    <property type="match status" value="1"/>
</dbReference>
<dbReference type="Gene3D" id="3.30.565.10">
    <property type="entry name" value="Histidine kinase-like ATPase, C-terminal domain"/>
    <property type="match status" value="1"/>
</dbReference>
<dbReference type="HAMAP" id="MF_00505">
    <property type="entry name" value="HSP90"/>
    <property type="match status" value="1"/>
</dbReference>
<dbReference type="InterPro" id="IPR036890">
    <property type="entry name" value="HATPase_C_sf"/>
</dbReference>
<dbReference type="InterPro" id="IPR019805">
    <property type="entry name" value="Heat_shock_protein_90_CS"/>
</dbReference>
<dbReference type="InterPro" id="IPR037196">
    <property type="entry name" value="HSP90_C"/>
</dbReference>
<dbReference type="InterPro" id="IPR001404">
    <property type="entry name" value="Hsp90_fam"/>
</dbReference>
<dbReference type="InterPro" id="IPR020575">
    <property type="entry name" value="Hsp90_N"/>
</dbReference>
<dbReference type="InterPro" id="IPR020568">
    <property type="entry name" value="Ribosomal_Su5_D2-typ_SF"/>
</dbReference>
<dbReference type="NCBIfam" id="NF003555">
    <property type="entry name" value="PRK05218.1"/>
    <property type="match status" value="1"/>
</dbReference>
<dbReference type="PANTHER" id="PTHR11528">
    <property type="entry name" value="HEAT SHOCK PROTEIN 90 FAMILY MEMBER"/>
    <property type="match status" value="1"/>
</dbReference>
<dbReference type="Pfam" id="PF13589">
    <property type="entry name" value="HATPase_c_3"/>
    <property type="match status" value="1"/>
</dbReference>
<dbReference type="Pfam" id="PF00183">
    <property type="entry name" value="HSP90"/>
    <property type="match status" value="1"/>
</dbReference>
<dbReference type="PIRSF" id="PIRSF002583">
    <property type="entry name" value="Hsp90"/>
    <property type="match status" value="1"/>
</dbReference>
<dbReference type="PRINTS" id="PR00775">
    <property type="entry name" value="HEATSHOCK90"/>
</dbReference>
<dbReference type="SMART" id="SM00387">
    <property type="entry name" value="HATPase_c"/>
    <property type="match status" value="1"/>
</dbReference>
<dbReference type="SUPFAM" id="SSF55874">
    <property type="entry name" value="ATPase domain of HSP90 chaperone/DNA topoisomerase II/histidine kinase"/>
    <property type="match status" value="1"/>
</dbReference>
<dbReference type="SUPFAM" id="SSF110942">
    <property type="entry name" value="HSP90 C-terminal domain"/>
    <property type="match status" value="1"/>
</dbReference>
<dbReference type="SUPFAM" id="SSF54211">
    <property type="entry name" value="Ribosomal protein S5 domain 2-like"/>
    <property type="match status" value="1"/>
</dbReference>
<dbReference type="PROSITE" id="PS00298">
    <property type="entry name" value="HSP90"/>
    <property type="match status" value="1"/>
</dbReference>
<proteinExistence type="evidence at protein level"/>
<keyword id="KW-0067">ATP-binding</keyword>
<keyword id="KW-0143">Chaperone</keyword>
<keyword id="KW-0963">Cytoplasm</keyword>
<keyword id="KW-0391">Immunity</keyword>
<keyword id="KW-0399">Innate immunity</keyword>
<keyword id="KW-0547">Nucleotide-binding</keyword>
<keyword id="KW-0597">Phosphoprotein</keyword>
<keyword id="KW-0611">Plant defense</keyword>
<keyword id="KW-1185">Reference proteome</keyword>
<keyword id="KW-0346">Stress response</keyword>
<name>HS901_ARATH</name>
<feature type="chain" id="PRO_0000062946" description="Heat shock protein 90-1">
    <location>
        <begin position="1"/>
        <end position="700"/>
    </location>
</feature>
<feature type="region of interest" description="Disordered" evidence="3">
    <location>
        <begin position="215"/>
        <end position="249"/>
    </location>
</feature>
<feature type="region of interest" description="Disordered" evidence="3">
    <location>
        <begin position="673"/>
        <end position="700"/>
    </location>
</feature>
<feature type="short sequence motif" description="TPR repeat-binding">
    <location>
        <begin position="696"/>
        <end position="700"/>
    </location>
</feature>
<feature type="compositionally biased region" description="Acidic residues" evidence="3">
    <location>
        <begin position="673"/>
        <end position="691"/>
    </location>
</feature>
<feature type="binding site" evidence="2">
    <location>
        <position position="34"/>
    </location>
    <ligand>
        <name>ATP</name>
        <dbReference type="ChEBI" id="CHEBI:30616"/>
    </ligand>
</feature>
<feature type="binding site" evidence="2">
    <location>
        <position position="38"/>
    </location>
    <ligand>
        <name>ATP</name>
        <dbReference type="ChEBI" id="CHEBI:30616"/>
    </ligand>
</feature>
<feature type="binding site" evidence="2">
    <location>
        <position position="80"/>
    </location>
    <ligand>
        <name>ATP</name>
        <dbReference type="ChEBI" id="CHEBI:30616"/>
    </ligand>
</feature>
<feature type="binding site" evidence="2">
    <location>
        <position position="85"/>
    </location>
    <ligand>
        <name>ATP</name>
        <dbReference type="ChEBI" id="CHEBI:30616"/>
    </ligand>
</feature>
<feature type="binding site" evidence="2">
    <location>
        <position position="93"/>
    </location>
    <ligand>
        <name>ATP</name>
        <dbReference type="ChEBI" id="CHEBI:30616"/>
    </ligand>
</feature>
<feature type="binding site" evidence="2">
    <location>
        <position position="99"/>
    </location>
    <ligand>
        <name>ATP</name>
        <dbReference type="ChEBI" id="CHEBI:30616"/>
    </ligand>
</feature>
<feature type="binding site" evidence="2">
    <location>
        <begin position="100"/>
        <end position="101"/>
    </location>
    <ligand>
        <name>ATP</name>
        <dbReference type="ChEBI" id="CHEBI:30616"/>
    </ligand>
</feature>
<feature type="binding site" evidence="2">
    <location>
        <begin position="120"/>
        <end position="125"/>
    </location>
    <ligand>
        <name>ATP</name>
        <dbReference type="ChEBI" id="CHEBI:30616"/>
    </ligand>
</feature>
<feature type="binding site" evidence="2">
    <location>
        <position position="172"/>
    </location>
    <ligand>
        <name>ATP</name>
        <dbReference type="ChEBI" id="CHEBI:30616"/>
    </ligand>
</feature>
<feature type="binding site" evidence="2">
    <location>
        <position position="372"/>
    </location>
    <ligand>
        <name>ATP</name>
        <dbReference type="ChEBI" id="CHEBI:30616"/>
    </ligand>
</feature>
<feature type="modified residue" description="Phosphoserine" evidence="13 14 15">
    <location>
        <position position="219"/>
    </location>
</feature>
<feature type="sequence conflict" description="In Ref. 1; AAA32822." evidence="12" ref="1">
    <original>S</original>
    <variation>A</variation>
    <location>
        <position position="72"/>
    </location>
</feature>
<feature type="sequence conflict" description="In Ref. 3; CAA68885." evidence="12" ref="3">
    <original>S</original>
    <variation>P</variation>
    <location>
        <position position="72"/>
    </location>
</feature>
<feature type="sequence conflict" description="In Ref. 1; AAA32822 and 3; CAA68885." evidence="12" ref="1 3">
    <original>T</original>
    <variation>S</variation>
    <location>
        <position position="175"/>
    </location>
</feature>
<feature type="sequence conflict" description="In Ref. 2; BAA00615." evidence="12" ref="2">
    <original>T</original>
    <variation>I</variation>
    <location>
        <position position="210"/>
    </location>
</feature>
<feature type="sequence conflict" description="In Ref. 3; CAA68885." evidence="12" ref="3">
    <original>E</original>
    <variation>K</variation>
    <location>
        <position position="241"/>
    </location>
</feature>
<feature type="sequence conflict" description="In Ref. 1; AAA32822." evidence="12" ref="1">
    <original>Y</original>
    <variation>S</variation>
    <location>
        <position position="281"/>
    </location>
</feature>
<feature type="sequence conflict" description="In Ref. 3; CAA68885." evidence="12" ref="3">
    <location>
        <position position="478"/>
    </location>
</feature>
<feature type="sequence conflict" description="In Ref. 3; CAA68885." evidence="12" ref="3">
    <original>E</original>
    <variation>D</variation>
    <location>
        <position position="618"/>
    </location>
</feature>
<evidence type="ECO:0000250" key="1"/>
<evidence type="ECO:0000250" key="2">
    <source>
        <dbReference type="UniProtKB" id="P02829"/>
    </source>
</evidence>
<evidence type="ECO:0000256" key="3">
    <source>
        <dbReference type="SAM" id="MobiDB-lite"/>
    </source>
</evidence>
<evidence type="ECO:0000269" key="4">
    <source>
    </source>
</evidence>
<evidence type="ECO:0000269" key="5">
    <source>
    </source>
</evidence>
<evidence type="ECO:0000269" key="6">
    <source>
    </source>
</evidence>
<evidence type="ECO:0000269" key="7">
    <source>
    </source>
</evidence>
<evidence type="ECO:0000269" key="8">
    <source>
    </source>
</evidence>
<evidence type="ECO:0000269" key="9">
    <source>
    </source>
</evidence>
<evidence type="ECO:0000269" key="10">
    <source>
    </source>
</evidence>
<evidence type="ECO:0000303" key="11">
    <source>
    </source>
</evidence>
<evidence type="ECO:0000305" key="12"/>
<evidence type="ECO:0007744" key="13">
    <source>
    </source>
</evidence>
<evidence type="ECO:0007744" key="14">
    <source>
    </source>
</evidence>
<evidence type="ECO:0007744" key="15">
    <source>
    </source>
</evidence>